<dbReference type="EC" id="4.2.3.111"/>
<dbReference type="EMBL" id="AF543529">
    <property type="protein sequence ID" value="AAO61227.1"/>
    <property type="molecule type" value="mRNA"/>
</dbReference>
<dbReference type="SMR" id="Q84KL4"/>
<dbReference type="UniPathway" id="UPA00924"/>
<dbReference type="GO" id="GO:0009507">
    <property type="term" value="C:chloroplast"/>
    <property type="evidence" value="ECO:0007669"/>
    <property type="project" value="UniProtKB-SubCell"/>
</dbReference>
<dbReference type="GO" id="GO:0000287">
    <property type="term" value="F:magnesium ion binding"/>
    <property type="evidence" value="ECO:0000314"/>
    <property type="project" value="UniProtKB"/>
</dbReference>
<dbReference type="GO" id="GO:0046872">
    <property type="term" value="F:metal ion binding"/>
    <property type="evidence" value="ECO:0000314"/>
    <property type="project" value="UniProtKB"/>
</dbReference>
<dbReference type="GO" id="GO:0030955">
    <property type="term" value="F:potassium ion binding"/>
    <property type="evidence" value="ECO:0000314"/>
    <property type="project" value="UniProtKB"/>
</dbReference>
<dbReference type="GO" id="GO:0010333">
    <property type="term" value="F:terpene synthase activity"/>
    <property type="evidence" value="ECO:0000314"/>
    <property type="project" value="UniProtKB"/>
</dbReference>
<dbReference type="GO" id="GO:0016102">
    <property type="term" value="P:diterpenoid biosynthetic process"/>
    <property type="evidence" value="ECO:0007669"/>
    <property type="project" value="InterPro"/>
</dbReference>
<dbReference type="GO" id="GO:0033383">
    <property type="term" value="P:geranyl diphosphate metabolic process"/>
    <property type="evidence" value="ECO:0000314"/>
    <property type="project" value="UniProtKB"/>
</dbReference>
<dbReference type="GO" id="GO:0043693">
    <property type="term" value="P:monoterpene biosynthetic process"/>
    <property type="evidence" value="ECO:0000314"/>
    <property type="project" value="UniProtKB"/>
</dbReference>
<dbReference type="CDD" id="cd00684">
    <property type="entry name" value="Terpene_cyclase_plant_C1"/>
    <property type="match status" value="1"/>
</dbReference>
<dbReference type="FunFam" id="1.50.10.130:FF:000004">
    <property type="entry name" value="Carene synthase, chloroplastic"/>
    <property type="match status" value="1"/>
</dbReference>
<dbReference type="FunFam" id="1.10.600.10:FF:000005">
    <property type="entry name" value="Ent-kaur-16-ene synthase, chloroplastic"/>
    <property type="match status" value="1"/>
</dbReference>
<dbReference type="Gene3D" id="1.10.600.10">
    <property type="entry name" value="Farnesyl Diphosphate Synthase"/>
    <property type="match status" value="1"/>
</dbReference>
<dbReference type="Gene3D" id="1.50.10.130">
    <property type="entry name" value="Terpene synthase, N-terminal domain"/>
    <property type="match status" value="1"/>
</dbReference>
<dbReference type="InterPro" id="IPR008949">
    <property type="entry name" value="Isoprenoid_synthase_dom_sf"/>
</dbReference>
<dbReference type="InterPro" id="IPR034741">
    <property type="entry name" value="Terpene_cyclase-like_1_C"/>
</dbReference>
<dbReference type="InterPro" id="IPR044814">
    <property type="entry name" value="Terpene_cyclase_plant_C1"/>
</dbReference>
<dbReference type="InterPro" id="IPR001906">
    <property type="entry name" value="Terpene_synth_N"/>
</dbReference>
<dbReference type="InterPro" id="IPR036965">
    <property type="entry name" value="Terpene_synth_N_sf"/>
</dbReference>
<dbReference type="InterPro" id="IPR050148">
    <property type="entry name" value="Terpene_synthase-like"/>
</dbReference>
<dbReference type="InterPro" id="IPR005630">
    <property type="entry name" value="Terpene_synthase_metal-bd"/>
</dbReference>
<dbReference type="InterPro" id="IPR008930">
    <property type="entry name" value="Terpenoid_cyclase/PrenylTrfase"/>
</dbReference>
<dbReference type="PANTHER" id="PTHR31225">
    <property type="entry name" value="OS04G0344100 PROTEIN-RELATED"/>
    <property type="match status" value="1"/>
</dbReference>
<dbReference type="PANTHER" id="PTHR31225:SF98">
    <property type="entry name" value="TERPENE SYNTHASE 9-RELATED"/>
    <property type="match status" value="1"/>
</dbReference>
<dbReference type="Pfam" id="PF01397">
    <property type="entry name" value="Terpene_synth"/>
    <property type="match status" value="1"/>
</dbReference>
<dbReference type="Pfam" id="PF03936">
    <property type="entry name" value="Terpene_synth_C"/>
    <property type="match status" value="1"/>
</dbReference>
<dbReference type="SFLD" id="SFLDS00005">
    <property type="entry name" value="Isoprenoid_Synthase_Type_I"/>
    <property type="match status" value="1"/>
</dbReference>
<dbReference type="SFLD" id="SFLDG01019">
    <property type="entry name" value="Terpene_Cyclase_Like_1_C_Termi"/>
    <property type="match status" value="1"/>
</dbReference>
<dbReference type="SFLD" id="SFLDG01014">
    <property type="entry name" value="Terpene_Cyclase_Like_1_N-term"/>
    <property type="match status" value="1"/>
</dbReference>
<dbReference type="SUPFAM" id="SSF48239">
    <property type="entry name" value="Terpenoid cyclases/Protein prenyltransferases"/>
    <property type="match status" value="1"/>
</dbReference>
<dbReference type="SUPFAM" id="SSF48576">
    <property type="entry name" value="Terpenoid synthases"/>
    <property type="match status" value="1"/>
</dbReference>
<gene>
    <name type="primary">PT10</name>
</gene>
<comment type="function">
    <text evidence="3">Involved in defensive oleoresin formation in conifers in response to insect attack or other injury. Involved in monoterpene (C10) olefins biosynthesis. Produces 57.3% alpha-terpineol (15.1% (+)/84.9% (-)), 27.6% limonene (25.2% (+)/74.8% (-)), 8% terpinolene, 4.7% beta-pinene (14.8% (+)/85.2% (-)), 1.3% alpha-pinene (100% (+)) and 1.1% myrcene.</text>
</comment>
<comment type="catalytic activity">
    <reaction evidence="3">
        <text>(2E)-geranyl diphosphate + H2O = (S)-alpha-terpineol + diphosphate</text>
        <dbReference type="Rhea" id="RHEA:32551"/>
        <dbReference type="ChEBI" id="CHEBI:128"/>
        <dbReference type="ChEBI" id="CHEBI:15377"/>
        <dbReference type="ChEBI" id="CHEBI:33019"/>
        <dbReference type="ChEBI" id="CHEBI:58057"/>
        <dbReference type="EC" id="4.2.3.111"/>
    </reaction>
</comment>
<comment type="cofactor">
    <cofactor evidence="1">
        <name>Mg(2+)</name>
        <dbReference type="ChEBI" id="CHEBI:18420"/>
    </cofactor>
    <cofactor evidence="1">
        <name>Mn(2+)</name>
        <dbReference type="ChEBI" id="CHEBI:29035"/>
    </cofactor>
    <text evidence="1">Binds 3 Mg(2+) or Mn(2+) ions per subunit.</text>
</comment>
<comment type="pathway">
    <text>Terpene metabolism; oleoresin biosynthesis.</text>
</comment>
<comment type="subcellular location">
    <subcellularLocation>
        <location evidence="4">Plastid</location>
        <location evidence="4">Chloroplast</location>
    </subcellularLocation>
</comment>
<comment type="domain">
    <text>The Asp-Asp-Xaa-Xaa-Asp/Glu (DDXXD/E) motif is important for the catalytic activity, presumably through binding to Mg(2+).</text>
</comment>
<comment type="similarity">
    <text evidence="4">Belongs to the terpene synthase family. Tpsd subfamily.</text>
</comment>
<organism>
    <name type="scientific">Pinus taeda</name>
    <name type="common">Loblolly pine</name>
    <dbReference type="NCBI Taxonomy" id="3352"/>
    <lineage>
        <taxon>Eukaryota</taxon>
        <taxon>Viridiplantae</taxon>
        <taxon>Streptophyta</taxon>
        <taxon>Embryophyta</taxon>
        <taxon>Tracheophyta</taxon>
        <taxon>Spermatophyta</taxon>
        <taxon>Pinopsida</taxon>
        <taxon>Pinidae</taxon>
        <taxon>Conifers I</taxon>
        <taxon>Pinales</taxon>
        <taxon>Pinaceae</taxon>
        <taxon>Pinus</taxon>
        <taxon>Pinus subgen. Pinus</taxon>
    </lineage>
</organism>
<proteinExistence type="evidence at protein level"/>
<keyword id="KW-0150">Chloroplast</keyword>
<keyword id="KW-0456">Lyase</keyword>
<keyword id="KW-0460">Magnesium</keyword>
<keyword id="KW-0464">Manganese</keyword>
<keyword id="KW-0479">Metal-binding</keyword>
<keyword id="KW-0934">Plastid</keyword>
<keyword id="KW-0809">Transit peptide</keyword>
<evidence type="ECO:0000250" key="1"/>
<evidence type="ECO:0000255" key="2"/>
<evidence type="ECO:0000269" key="3">
    <source>
    </source>
</evidence>
<evidence type="ECO:0000305" key="4"/>
<name>PT10_PINTA</name>
<sequence length="627" mass="71884">MDLISVLPSASKSCVCLHKPLSSSTHKLKPFCKTIRILVMPRRWEFARPSMSLSTVASEDDIQRRTGGYLSNLWNDDVIQFLSTPYGELAYRERAERLIDEVRDIFSSMSLEDGEFSDLIQRLWMVDNVERLGIDRHFKNEIKSALDYVYSYWSEKGIGCGTKSIITNLNSTALGFRTLRLHGYPVSADVLKHFRNQIGQFVSCPSETEEDIRIMVNLYRASLIAFPVAFPGEKVMEEAESFSEKYLKETLQKIPDCSLSREIGDVLEHGWHTNLPRLEARNYIDVFGQDTKNMEPNRKTEKLLELAKLEFNIFQSIQKTELESLLRWWNDSGSPQITFTRHRHVEYYTLASCIAFEPQHSGFRLGFAKACHILTVLDDMYDLFGTVDELKLFTAAIKRWDPSATDCLPQYMKGIYMMVYNTVNEMSAEAQKAQGRDTLNYARQAWEDCLDSHMQEAKWIATGFLPTFEEYLENGKVSSAHRVSALQPMLTMDIPFPPHILKEVDFPSNLNDLACAMLRLRGDTRCYQADRARGEETSCISCYMKDNPGATEEDALNHLNVMISGVIKELNWELLKPNSSVPISSKKINFDITRAFHYGYKYRDGYSVSSVETKSLVMRTLLEPVPL</sequence>
<feature type="transit peptide" description="Chloroplast" evidence="2">
    <location>
        <begin position="1"/>
        <end position="52"/>
    </location>
</feature>
<feature type="chain" id="PRO_0000419233" description="(-)-alpha-terpineol synthase, chloroplastic">
    <location>
        <begin position="53"/>
        <end position="627"/>
    </location>
</feature>
<feature type="short sequence motif" description="DDXXD motif">
    <location>
        <begin position="378"/>
        <end position="382"/>
    </location>
</feature>
<feature type="binding site" evidence="1">
    <location>
        <position position="378"/>
    </location>
    <ligand>
        <name>Mg(2+)</name>
        <dbReference type="ChEBI" id="CHEBI:18420"/>
        <label>1</label>
    </ligand>
</feature>
<feature type="binding site" evidence="1">
    <location>
        <position position="378"/>
    </location>
    <ligand>
        <name>Mg(2+)</name>
        <dbReference type="ChEBI" id="CHEBI:18420"/>
        <label>2</label>
    </ligand>
</feature>
<feature type="binding site" evidence="1">
    <location>
        <position position="382"/>
    </location>
    <ligand>
        <name>Mg(2+)</name>
        <dbReference type="ChEBI" id="CHEBI:18420"/>
        <label>1</label>
    </ligand>
</feature>
<feature type="binding site" evidence="1">
    <location>
        <position position="382"/>
    </location>
    <ligand>
        <name>Mg(2+)</name>
        <dbReference type="ChEBI" id="CHEBI:18420"/>
        <label>2</label>
    </ligand>
</feature>
<feature type="binding site" evidence="1">
    <location>
        <position position="530"/>
    </location>
    <ligand>
        <name>Mg(2+)</name>
        <dbReference type="ChEBI" id="CHEBI:18420"/>
        <label>3</label>
    </ligand>
</feature>
<protein>
    <recommendedName>
        <fullName>(-)-alpha-terpineol synthase, chloroplastic</fullName>
        <ecNumber>4.2.3.111</ecNumber>
    </recommendedName>
</protein>
<reference key="1">
    <citation type="journal article" date="2003" name="Arch. Biochem. Biophys.">
        <title>cDNA isolation, functional expression, and characterization of (+)-alpha-pinene synthase and (-)-alpha-pinene synthase from loblolly pine (Pinus taeda): stereocontrol in pinene biosynthesis.</title>
        <authorList>
            <person name="Phillips M.A."/>
            <person name="Wildung M.R."/>
            <person name="Williams D.C."/>
            <person name="Hyatt D.C."/>
            <person name="Croteau R."/>
        </authorList>
    </citation>
    <scope>NUCLEOTIDE SEQUENCE [MRNA]</scope>
    <scope>FUNCTION</scope>
    <scope>CATALYTIC ACTIVITY</scope>
</reference>
<accession>Q84KL4</accession>